<evidence type="ECO:0000255" key="1">
    <source>
        <dbReference type="HAMAP-Rule" id="MF_00092"/>
    </source>
</evidence>
<feature type="chain" id="PRO_1000202677" description="Endonuclease MutS2">
    <location>
        <begin position="1"/>
        <end position="769"/>
    </location>
</feature>
<feature type="domain" description="Smr" evidence="1">
    <location>
        <begin position="694"/>
        <end position="769"/>
    </location>
</feature>
<feature type="binding site" evidence="1">
    <location>
        <begin position="335"/>
        <end position="342"/>
    </location>
    <ligand>
        <name>ATP</name>
        <dbReference type="ChEBI" id="CHEBI:30616"/>
    </ligand>
</feature>
<proteinExistence type="inferred from homology"/>
<gene>
    <name evidence="1" type="primary">mutS2</name>
    <name evidence="1" type="synonym">rqcU</name>
    <name type="ordered locus">Desal_1610</name>
</gene>
<comment type="function">
    <text evidence="1">Endonuclease that is involved in the suppression of homologous recombination and thus may have a key role in the control of bacterial genetic diversity.</text>
</comment>
<comment type="function">
    <text evidence="1">Acts as a ribosome collision sensor, splitting the ribosome into its 2 subunits. Detects stalled/collided 70S ribosomes which it binds and splits by an ATP-hydrolysis driven conformational change. Acts upstream of the ribosome quality control system (RQC), a ribosome-associated complex that mediates the extraction of incompletely synthesized nascent chains from stalled ribosomes and their subsequent degradation. Probably generates substrates for RQC.</text>
</comment>
<comment type="subunit">
    <text evidence="1">Homodimer. Binds to stalled ribosomes, contacting rRNA.</text>
</comment>
<comment type="similarity">
    <text evidence="1">Belongs to the DNA mismatch repair MutS family. MutS2 subfamily.</text>
</comment>
<keyword id="KW-0067">ATP-binding</keyword>
<keyword id="KW-0238">DNA-binding</keyword>
<keyword id="KW-0255">Endonuclease</keyword>
<keyword id="KW-0378">Hydrolase</keyword>
<keyword id="KW-0540">Nuclease</keyword>
<keyword id="KW-0547">Nucleotide-binding</keyword>
<keyword id="KW-1185">Reference proteome</keyword>
<keyword id="KW-0694">RNA-binding</keyword>
<keyword id="KW-0699">rRNA-binding</keyword>
<sequence>MEPRSLQLLEFPKVLNVLSGHCVSTSGAEACLALSPMDDAGSINSTAQFFRQGQNFVKETGFRLGTFPPLEGLFQYLVKPNNVLDADALYALVQTLGQARTLKEALEIAEKREWDTILEFLEGVSWPEKTFSGLKRCLDQDGNIKDESSPELYDIRQSIRSLHQRCSKKVRDFIHGEDISRFLQDDFMTITNDRYVLPLKTNFKGRLQGIVHDYSNTGETCYFEPMFLVELNNSMQELKQQERTEELKILTYLTGLVRSEYDQCEAAYGFLVEYDVLQAKINFADAVKAVAVDVQSGAGFDLRGARHPLLASAVGGVNPLNIELPTDQKVLIVSGGNAGGKTVCLKTVGLLSAMAFSGIPVPVEKGSVLPLFKEIFVIMGDEQSLEENVSTFSAQIQSISRIWDSMDSSTLFILDEFGSGTDPAQGAALAQAVVDGLLENGVTCFAATHFPALKTYALVTEGVRAASVLFDPSTKKPLFSLAYDQVGASIALDVAREHGFPESLLAKAEQYLLMEGSDSGSVMNRLNELAVSREKELEEMDRIKAKLESKRAKLEEKFERERLTVLADVKKQAQSVLKEWQDGKIGRKQALKKLSEARSTIGGDEKPKSDVKPFSFDDIKVGKPILNISWNRKGVVIEKDERKKRVKVDMDGVAMWIPADQLGPVGKKAVQEKVRQVTEKADKKAPKGEMTLKIDLRGKRADVAISELDRFFDQALLRGATELEIVHGRGTGALRREVHIFLDDNPAVAGYSLAPEDRGGDGMTEVELV</sequence>
<reference key="1">
    <citation type="submission" date="2009-06" db="EMBL/GenBank/DDBJ databases">
        <title>Complete sequence of Desulfovibrio salexigens DSM 2638.</title>
        <authorList>
            <consortium name="US DOE Joint Genome Institute"/>
            <person name="Lucas S."/>
            <person name="Copeland A."/>
            <person name="Lapidus A."/>
            <person name="Glavina del Rio T."/>
            <person name="Tice H."/>
            <person name="Bruce D."/>
            <person name="Goodwin L."/>
            <person name="Pitluck S."/>
            <person name="Munk A.C."/>
            <person name="Brettin T."/>
            <person name="Detter J.C."/>
            <person name="Han C."/>
            <person name="Tapia R."/>
            <person name="Larimer F."/>
            <person name="Land M."/>
            <person name="Hauser L."/>
            <person name="Kyrpides N."/>
            <person name="Anderson I."/>
            <person name="Wall J.D."/>
            <person name="Arkin A.P."/>
            <person name="Dehal P."/>
            <person name="Chivian D."/>
            <person name="Giles B."/>
            <person name="Hazen T.C."/>
        </authorList>
    </citation>
    <scope>NUCLEOTIDE SEQUENCE [LARGE SCALE GENOMIC DNA]</scope>
    <source>
        <strain>ATCC 14822 / DSM 2638 / NCIMB 8403 / VKM B-1763</strain>
    </source>
</reference>
<accession>C6BSW8</accession>
<organism>
    <name type="scientific">Maridesulfovibrio salexigens (strain ATCC 14822 / DSM 2638 / NCIMB 8403 / VKM B-1763)</name>
    <name type="common">Desulfovibrio salexigens</name>
    <dbReference type="NCBI Taxonomy" id="526222"/>
    <lineage>
        <taxon>Bacteria</taxon>
        <taxon>Pseudomonadati</taxon>
        <taxon>Thermodesulfobacteriota</taxon>
        <taxon>Desulfovibrionia</taxon>
        <taxon>Desulfovibrionales</taxon>
        <taxon>Desulfovibrionaceae</taxon>
        <taxon>Maridesulfovibrio</taxon>
    </lineage>
</organism>
<protein>
    <recommendedName>
        <fullName evidence="1">Endonuclease MutS2</fullName>
        <ecNumber evidence="1">3.1.-.-</ecNumber>
    </recommendedName>
    <alternativeName>
        <fullName evidence="1">Ribosome-associated protein quality control-upstream factor</fullName>
        <shortName evidence="1">RQC-upstream factor</shortName>
        <shortName evidence="1">RqcU</shortName>
        <ecNumber evidence="1">3.6.4.-</ecNumber>
    </alternativeName>
</protein>
<name>MUTS2_MARSD</name>
<dbReference type="EC" id="3.1.-.-" evidence="1"/>
<dbReference type="EC" id="3.6.4.-" evidence="1"/>
<dbReference type="EMBL" id="CP001649">
    <property type="protein sequence ID" value="ACS79672.1"/>
    <property type="molecule type" value="Genomic_DNA"/>
</dbReference>
<dbReference type="RefSeq" id="WP_015851488.1">
    <property type="nucleotide sequence ID" value="NC_012881.1"/>
</dbReference>
<dbReference type="SMR" id="C6BSW8"/>
<dbReference type="STRING" id="526222.Desal_1610"/>
<dbReference type="KEGG" id="dsa:Desal_1610"/>
<dbReference type="eggNOG" id="COG1193">
    <property type="taxonomic scope" value="Bacteria"/>
</dbReference>
<dbReference type="HOGENOM" id="CLU_011252_2_1_7"/>
<dbReference type="OrthoDB" id="9808166at2"/>
<dbReference type="Proteomes" id="UP000002601">
    <property type="component" value="Chromosome"/>
</dbReference>
<dbReference type="GO" id="GO:0005524">
    <property type="term" value="F:ATP binding"/>
    <property type="evidence" value="ECO:0007669"/>
    <property type="project" value="UniProtKB-UniRule"/>
</dbReference>
<dbReference type="GO" id="GO:0016887">
    <property type="term" value="F:ATP hydrolysis activity"/>
    <property type="evidence" value="ECO:0007669"/>
    <property type="project" value="InterPro"/>
</dbReference>
<dbReference type="GO" id="GO:0140664">
    <property type="term" value="F:ATP-dependent DNA damage sensor activity"/>
    <property type="evidence" value="ECO:0007669"/>
    <property type="project" value="InterPro"/>
</dbReference>
<dbReference type="GO" id="GO:0004519">
    <property type="term" value="F:endonuclease activity"/>
    <property type="evidence" value="ECO:0007669"/>
    <property type="project" value="UniProtKB-UniRule"/>
</dbReference>
<dbReference type="GO" id="GO:0030983">
    <property type="term" value="F:mismatched DNA binding"/>
    <property type="evidence" value="ECO:0007669"/>
    <property type="project" value="InterPro"/>
</dbReference>
<dbReference type="GO" id="GO:0043023">
    <property type="term" value="F:ribosomal large subunit binding"/>
    <property type="evidence" value="ECO:0007669"/>
    <property type="project" value="UniProtKB-UniRule"/>
</dbReference>
<dbReference type="GO" id="GO:0019843">
    <property type="term" value="F:rRNA binding"/>
    <property type="evidence" value="ECO:0007669"/>
    <property type="project" value="UniProtKB-UniRule"/>
</dbReference>
<dbReference type="GO" id="GO:0006298">
    <property type="term" value="P:mismatch repair"/>
    <property type="evidence" value="ECO:0007669"/>
    <property type="project" value="InterPro"/>
</dbReference>
<dbReference type="GO" id="GO:0045910">
    <property type="term" value="P:negative regulation of DNA recombination"/>
    <property type="evidence" value="ECO:0007669"/>
    <property type="project" value="InterPro"/>
</dbReference>
<dbReference type="GO" id="GO:0072344">
    <property type="term" value="P:rescue of stalled ribosome"/>
    <property type="evidence" value="ECO:0007669"/>
    <property type="project" value="UniProtKB-UniRule"/>
</dbReference>
<dbReference type="Gene3D" id="3.30.1370.110">
    <property type="match status" value="1"/>
</dbReference>
<dbReference type="Gene3D" id="3.40.50.300">
    <property type="entry name" value="P-loop containing nucleotide triphosphate hydrolases"/>
    <property type="match status" value="1"/>
</dbReference>
<dbReference type="HAMAP" id="MF_00092">
    <property type="entry name" value="MutS2"/>
    <property type="match status" value="1"/>
</dbReference>
<dbReference type="InterPro" id="IPR000432">
    <property type="entry name" value="DNA_mismatch_repair_MutS_C"/>
</dbReference>
<dbReference type="InterPro" id="IPR007696">
    <property type="entry name" value="DNA_mismatch_repair_MutS_core"/>
</dbReference>
<dbReference type="InterPro" id="IPR036187">
    <property type="entry name" value="DNA_mismatch_repair_MutS_sf"/>
</dbReference>
<dbReference type="InterPro" id="IPR046893">
    <property type="entry name" value="MSSS"/>
</dbReference>
<dbReference type="InterPro" id="IPR045076">
    <property type="entry name" value="MutS"/>
</dbReference>
<dbReference type="InterPro" id="IPR005747">
    <property type="entry name" value="MutS2"/>
</dbReference>
<dbReference type="InterPro" id="IPR027417">
    <property type="entry name" value="P-loop_NTPase"/>
</dbReference>
<dbReference type="InterPro" id="IPR002625">
    <property type="entry name" value="Smr_dom"/>
</dbReference>
<dbReference type="InterPro" id="IPR036063">
    <property type="entry name" value="Smr_dom_sf"/>
</dbReference>
<dbReference type="NCBIfam" id="TIGR01069">
    <property type="entry name" value="mutS2"/>
    <property type="match status" value="1"/>
</dbReference>
<dbReference type="PANTHER" id="PTHR48466:SF2">
    <property type="entry name" value="OS10G0509000 PROTEIN"/>
    <property type="match status" value="1"/>
</dbReference>
<dbReference type="PANTHER" id="PTHR48466">
    <property type="entry name" value="OS10G0509000 PROTEIN-RELATED"/>
    <property type="match status" value="1"/>
</dbReference>
<dbReference type="Pfam" id="PF20297">
    <property type="entry name" value="MSSS"/>
    <property type="match status" value="1"/>
</dbReference>
<dbReference type="Pfam" id="PF00488">
    <property type="entry name" value="MutS_V"/>
    <property type="match status" value="1"/>
</dbReference>
<dbReference type="Pfam" id="PF01713">
    <property type="entry name" value="Smr"/>
    <property type="match status" value="1"/>
</dbReference>
<dbReference type="PIRSF" id="PIRSF005814">
    <property type="entry name" value="MutS_YshD"/>
    <property type="match status" value="1"/>
</dbReference>
<dbReference type="SMART" id="SM00534">
    <property type="entry name" value="MUTSac"/>
    <property type="match status" value="1"/>
</dbReference>
<dbReference type="SMART" id="SM00533">
    <property type="entry name" value="MUTSd"/>
    <property type="match status" value="1"/>
</dbReference>
<dbReference type="SMART" id="SM00463">
    <property type="entry name" value="SMR"/>
    <property type="match status" value="1"/>
</dbReference>
<dbReference type="SUPFAM" id="SSF48334">
    <property type="entry name" value="DNA repair protein MutS, domain III"/>
    <property type="match status" value="1"/>
</dbReference>
<dbReference type="SUPFAM" id="SSF52540">
    <property type="entry name" value="P-loop containing nucleoside triphosphate hydrolases"/>
    <property type="match status" value="1"/>
</dbReference>
<dbReference type="SUPFAM" id="SSF160443">
    <property type="entry name" value="SMR domain-like"/>
    <property type="match status" value="1"/>
</dbReference>
<dbReference type="PROSITE" id="PS00486">
    <property type="entry name" value="DNA_MISMATCH_REPAIR_2"/>
    <property type="match status" value="1"/>
</dbReference>
<dbReference type="PROSITE" id="PS50828">
    <property type="entry name" value="SMR"/>
    <property type="match status" value="1"/>
</dbReference>